<comment type="function">
    <text>Plays a role in inhibiting the onset of mitosis. Dephosphorylates sty1/spc1 and wis1/spc2/sty2.</text>
</comment>
<comment type="catalytic activity">
    <reaction evidence="3">
        <text>O-phospho-L-tyrosyl-[protein] + H2O = L-tyrosyl-[protein] + phosphate</text>
        <dbReference type="Rhea" id="RHEA:10684"/>
        <dbReference type="Rhea" id="RHEA-COMP:10136"/>
        <dbReference type="Rhea" id="RHEA-COMP:20101"/>
        <dbReference type="ChEBI" id="CHEBI:15377"/>
        <dbReference type="ChEBI" id="CHEBI:43474"/>
        <dbReference type="ChEBI" id="CHEBI:46858"/>
        <dbReference type="ChEBI" id="CHEBI:61978"/>
        <dbReference type="EC" id="3.1.3.48"/>
    </reaction>
</comment>
<comment type="subcellular location">
    <subcellularLocation>
        <location>Cytoplasm</location>
    </subcellularLocation>
</comment>
<comment type="similarity">
    <text evidence="5">Belongs to the protein-tyrosine phosphatase family. Non-receptor class subfamily.</text>
</comment>
<protein>
    <recommendedName>
        <fullName>Tyrosine-protein phosphatase 2</fullName>
        <ecNumber>3.1.3.48</ecNumber>
    </recommendedName>
    <alternativeName>
        <fullName>Protein-tyrosine phosphatase 2</fullName>
        <shortName>PTPase 2</shortName>
    </alternativeName>
</protein>
<evidence type="ECO:0000255" key="1">
    <source>
        <dbReference type="PROSITE-ProRule" id="PRU00160"/>
    </source>
</evidence>
<evidence type="ECO:0000255" key="2">
    <source>
        <dbReference type="PROSITE-ProRule" id="PRU00173"/>
    </source>
</evidence>
<evidence type="ECO:0000255" key="3">
    <source>
        <dbReference type="PROSITE-ProRule" id="PRU10044"/>
    </source>
</evidence>
<evidence type="ECO:0000256" key="4">
    <source>
        <dbReference type="SAM" id="MobiDB-lite"/>
    </source>
</evidence>
<evidence type="ECO:0000305" key="5"/>
<proteinExistence type="evidence at protein level"/>
<gene>
    <name type="primary">pyp2</name>
    <name type="ORF">SPAC19D5.01</name>
</gene>
<reference key="1">
    <citation type="journal article" date="1992" name="EMBO J.">
        <title>Negative regulation of mitosis by two functionally overlapping PTPases in fission yeast.</title>
        <authorList>
            <person name="Millar J.B.A."/>
            <person name="Russell P."/>
            <person name="Dixon J.E."/>
            <person name="Guan K.L."/>
        </authorList>
    </citation>
    <scope>NUCLEOTIDE SEQUENCE [GENOMIC DNA]</scope>
</reference>
<reference key="2">
    <citation type="journal article" date="1992" name="Mol. Cell. Biol.">
        <title>The fission yeast genes pyp1+ and pyp2+ encode protein tyrosine phosphatases that negatively regulate mitosis.</title>
        <authorList>
            <person name="Ottilie S."/>
            <person name="Chernoff J."/>
            <person name="Hannig G."/>
            <person name="Hoffman C.S."/>
            <person name="Erikson R.L."/>
        </authorList>
    </citation>
    <scope>NUCLEOTIDE SEQUENCE [MRNA]</scope>
</reference>
<reference key="3">
    <citation type="journal article" date="2002" name="Nature">
        <title>The genome sequence of Schizosaccharomyces pombe.</title>
        <authorList>
            <person name="Wood V."/>
            <person name="Gwilliam R."/>
            <person name="Rajandream M.A."/>
            <person name="Lyne M.H."/>
            <person name="Lyne R."/>
            <person name="Stewart A."/>
            <person name="Sgouros J.G."/>
            <person name="Peat N."/>
            <person name="Hayles J."/>
            <person name="Baker S.G."/>
            <person name="Basham D."/>
            <person name="Bowman S."/>
            <person name="Brooks K."/>
            <person name="Brown D."/>
            <person name="Brown S."/>
            <person name="Chillingworth T."/>
            <person name="Churcher C.M."/>
            <person name="Collins M."/>
            <person name="Connor R."/>
            <person name="Cronin A."/>
            <person name="Davis P."/>
            <person name="Feltwell T."/>
            <person name="Fraser A."/>
            <person name="Gentles S."/>
            <person name="Goble A."/>
            <person name="Hamlin N."/>
            <person name="Harris D.E."/>
            <person name="Hidalgo J."/>
            <person name="Hodgson G."/>
            <person name="Holroyd S."/>
            <person name="Hornsby T."/>
            <person name="Howarth S."/>
            <person name="Huckle E.J."/>
            <person name="Hunt S."/>
            <person name="Jagels K."/>
            <person name="James K.D."/>
            <person name="Jones L."/>
            <person name="Jones M."/>
            <person name="Leather S."/>
            <person name="McDonald S."/>
            <person name="McLean J."/>
            <person name="Mooney P."/>
            <person name="Moule S."/>
            <person name="Mungall K.L."/>
            <person name="Murphy L.D."/>
            <person name="Niblett D."/>
            <person name="Odell C."/>
            <person name="Oliver K."/>
            <person name="O'Neil S."/>
            <person name="Pearson D."/>
            <person name="Quail M.A."/>
            <person name="Rabbinowitsch E."/>
            <person name="Rutherford K.M."/>
            <person name="Rutter S."/>
            <person name="Saunders D."/>
            <person name="Seeger K."/>
            <person name="Sharp S."/>
            <person name="Skelton J."/>
            <person name="Simmonds M.N."/>
            <person name="Squares R."/>
            <person name="Squares S."/>
            <person name="Stevens K."/>
            <person name="Taylor K."/>
            <person name="Taylor R.G."/>
            <person name="Tivey A."/>
            <person name="Walsh S.V."/>
            <person name="Warren T."/>
            <person name="Whitehead S."/>
            <person name="Woodward J.R."/>
            <person name="Volckaert G."/>
            <person name="Aert R."/>
            <person name="Robben J."/>
            <person name="Grymonprez B."/>
            <person name="Weltjens I."/>
            <person name="Vanstreels E."/>
            <person name="Rieger M."/>
            <person name="Schaefer M."/>
            <person name="Mueller-Auer S."/>
            <person name="Gabel C."/>
            <person name="Fuchs M."/>
            <person name="Duesterhoeft A."/>
            <person name="Fritzc C."/>
            <person name="Holzer E."/>
            <person name="Moestl D."/>
            <person name="Hilbert H."/>
            <person name="Borzym K."/>
            <person name="Langer I."/>
            <person name="Beck A."/>
            <person name="Lehrach H."/>
            <person name="Reinhardt R."/>
            <person name="Pohl T.M."/>
            <person name="Eger P."/>
            <person name="Zimmermann W."/>
            <person name="Wedler H."/>
            <person name="Wambutt R."/>
            <person name="Purnelle B."/>
            <person name="Goffeau A."/>
            <person name="Cadieu E."/>
            <person name="Dreano S."/>
            <person name="Gloux S."/>
            <person name="Lelaure V."/>
            <person name="Mottier S."/>
            <person name="Galibert F."/>
            <person name="Aves S.J."/>
            <person name="Xiang Z."/>
            <person name="Hunt C."/>
            <person name="Moore K."/>
            <person name="Hurst S.M."/>
            <person name="Lucas M."/>
            <person name="Rochet M."/>
            <person name="Gaillardin C."/>
            <person name="Tallada V.A."/>
            <person name="Garzon A."/>
            <person name="Thode G."/>
            <person name="Daga R.R."/>
            <person name="Cruzado L."/>
            <person name="Jimenez J."/>
            <person name="Sanchez M."/>
            <person name="del Rey F."/>
            <person name="Benito J."/>
            <person name="Dominguez A."/>
            <person name="Revuelta J.L."/>
            <person name="Moreno S."/>
            <person name="Armstrong J."/>
            <person name="Forsburg S.L."/>
            <person name="Cerutti L."/>
            <person name="Lowe T."/>
            <person name="McCombie W.R."/>
            <person name="Paulsen I."/>
            <person name="Potashkin J."/>
            <person name="Shpakovski G.V."/>
            <person name="Ussery D."/>
            <person name="Barrell B.G."/>
            <person name="Nurse P."/>
        </authorList>
    </citation>
    <scope>NUCLEOTIDE SEQUENCE [LARGE SCALE GENOMIC DNA]</scope>
    <source>
        <strain>972 / ATCC 24843</strain>
    </source>
</reference>
<reference key="4">
    <citation type="journal article" date="2000" name="Genes Cells">
        <title>Large-scale screening of intracellular protein localization in living fission yeast cells by the use of a GFP-fusion genomic DNA library.</title>
        <authorList>
            <person name="Ding D.-Q."/>
            <person name="Tomita Y."/>
            <person name="Yamamoto A."/>
            <person name="Chikashige Y."/>
            <person name="Haraguchi T."/>
            <person name="Hiraoka Y."/>
        </authorList>
    </citation>
    <scope>NUCLEOTIDE SEQUENCE [LARGE SCALE GENOMIC DNA] OF 285-437</scope>
    <source>
        <strain>ATCC 38364 / 968</strain>
    </source>
</reference>
<reference key="5">
    <citation type="journal article" date="1991" name="Princess Takamatsu Symp.">
        <title>Protein phosphatases in cell division: how vital are they?</title>
        <authorList>
            <person name="Yanagida M."/>
            <person name="Yamano H."/>
            <person name="Stone E.M."/>
            <person name="Kinoshita N."/>
            <person name="Yoshida T."/>
            <person name="Shiozaki K."/>
        </authorList>
    </citation>
    <scope>NUCLEOTIDE SEQUENCE OF 485-519</scope>
</reference>
<reference key="6">
    <citation type="journal article" date="1995" name="Genes Dev.">
        <title>Pyp1 and Pyp2 PTPases dephosphorylate an osmosensing MAP kinase controlling cell size at division in fission yeast.</title>
        <authorList>
            <person name="Millar J.B.A."/>
            <person name="Buck V."/>
            <person name="Wilkinson M.G."/>
        </authorList>
    </citation>
    <scope>CHARACTERIZATION</scope>
</reference>
<dbReference type="EC" id="3.1.3.48"/>
<dbReference type="EMBL" id="S51320">
    <property type="protein sequence ID" value="AAB24544.1"/>
    <property type="molecule type" value="Genomic_DNA"/>
</dbReference>
<dbReference type="EMBL" id="X59599">
    <property type="protein sequence ID" value="CAA42167.1"/>
    <property type="molecule type" value="mRNA"/>
</dbReference>
<dbReference type="EMBL" id="AB027789">
    <property type="protein sequence ID" value="BAA87093.1"/>
    <property type="molecule type" value="Genomic_DNA"/>
</dbReference>
<dbReference type="EMBL" id="CU329670">
    <property type="protein sequence ID" value="CAB16711.1"/>
    <property type="molecule type" value="Genomic_DNA"/>
</dbReference>
<dbReference type="PIR" id="S28391">
    <property type="entry name" value="S28391"/>
</dbReference>
<dbReference type="PIR" id="T45160">
    <property type="entry name" value="T45160"/>
</dbReference>
<dbReference type="RefSeq" id="NP_594899.1">
    <property type="nucleotide sequence ID" value="NM_001020328.2"/>
</dbReference>
<dbReference type="SMR" id="P32586"/>
<dbReference type="BioGRID" id="278675">
    <property type="interactions" value="65"/>
</dbReference>
<dbReference type="FunCoup" id="P32586">
    <property type="interactions" value="27"/>
</dbReference>
<dbReference type="IntAct" id="P32586">
    <property type="interactions" value="1"/>
</dbReference>
<dbReference type="STRING" id="284812.P32586"/>
<dbReference type="iPTMnet" id="P32586"/>
<dbReference type="PaxDb" id="4896-SPAC19D5.01.1"/>
<dbReference type="EnsemblFungi" id="SPAC19D5.01.1">
    <property type="protein sequence ID" value="SPAC19D5.01.1:pep"/>
    <property type="gene ID" value="SPAC19D5.01"/>
</dbReference>
<dbReference type="GeneID" id="2542200"/>
<dbReference type="KEGG" id="spo:2542200"/>
<dbReference type="PomBase" id="SPAC19D5.01">
    <property type="gene designation" value="pyp2"/>
</dbReference>
<dbReference type="VEuPathDB" id="FungiDB:SPAC19D5.01"/>
<dbReference type="eggNOG" id="KOG0789">
    <property type="taxonomic scope" value="Eukaryota"/>
</dbReference>
<dbReference type="HOGENOM" id="CLU_386439_0_0_1"/>
<dbReference type="InParanoid" id="P32586"/>
<dbReference type="OMA" id="FWEMIWH"/>
<dbReference type="PhylomeDB" id="P32586"/>
<dbReference type="Reactome" id="R-SPO-5675221">
    <property type="pathway name" value="Negative regulation of MAPK pathway"/>
</dbReference>
<dbReference type="Reactome" id="R-SPO-6798695">
    <property type="pathway name" value="Neutrophil degranulation"/>
</dbReference>
<dbReference type="PRO" id="PR:P32586"/>
<dbReference type="Proteomes" id="UP000002485">
    <property type="component" value="Chromosome I"/>
</dbReference>
<dbReference type="GO" id="GO:0005737">
    <property type="term" value="C:cytoplasm"/>
    <property type="evidence" value="ECO:0000314"/>
    <property type="project" value="PomBase"/>
</dbReference>
<dbReference type="GO" id="GO:0005829">
    <property type="term" value="C:cytosol"/>
    <property type="evidence" value="ECO:0007005"/>
    <property type="project" value="PomBase"/>
</dbReference>
<dbReference type="GO" id="GO:0005739">
    <property type="term" value="C:mitochondrion"/>
    <property type="evidence" value="ECO:0007005"/>
    <property type="project" value="PomBase"/>
</dbReference>
<dbReference type="GO" id="GO:0005634">
    <property type="term" value="C:nucleus"/>
    <property type="evidence" value="ECO:0007005"/>
    <property type="project" value="PomBase"/>
</dbReference>
<dbReference type="GO" id="GO:0033550">
    <property type="term" value="F:MAP kinase tyrosine phosphatase activity"/>
    <property type="evidence" value="ECO:0000314"/>
    <property type="project" value="PomBase"/>
</dbReference>
<dbReference type="GO" id="GO:0004725">
    <property type="term" value="F:protein tyrosine phosphatase activity"/>
    <property type="evidence" value="ECO:0000314"/>
    <property type="project" value="PomBase"/>
</dbReference>
<dbReference type="GO" id="GO:0051301">
    <property type="term" value="P:cell division"/>
    <property type="evidence" value="ECO:0007669"/>
    <property type="project" value="UniProtKB-KW"/>
</dbReference>
<dbReference type="GO" id="GO:1903753">
    <property type="term" value="P:negative regulation of p38MAPK cascade"/>
    <property type="evidence" value="ECO:0000314"/>
    <property type="project" value="PomBase"/>
</dbReference>
<dbReference type="GO" id="GO:0007165">
    <property type="term" value="P:signal transduction"/>
    <property type="evidence" value="ECO:0000318"/>
    <property type="project" value="GO_Central"/>
</dbReference>
<dbReference type="CDD" id="cd01446">
    <property type="entry name" value="DSP_MapKP"/>
    <property type="match status" value="1"/>
</dbReference>
<dbReference type="CDD" id="cd18533">
    <property type="entry name" value="PTP_fungal"/>
    <property type="match status" value="1"/>
</dbReference>
<dbReference type="FunFam" id="3.90.190.10:FF:000294">
    <property type="entry name" value="Tyrosine-protein phosphatase 2"/>
    <property type="match status" value="1"/>
</dbReference>
<dbReference type="Gene3D" id="3.90.190.10">
    <property type="entry name" value="Protein tyrosine phosphatase superfamily"/>
    <property type="match status" value="1"/>
</dbReference>
<dbReference type="Gene3D" id="3.40.250.10">
    <property type="entry name" value="Rhodanese-like domain"/>
    <property type="match status" value="1"/>
</dbReference>
<dbReference type="InterPro" id="IPR029021">
    <property type="entry name" value="Prot-tyrosine_phosphatase-like"/>
</dbReference>
<dbReference type="InterPro" id="IPR050348">
    <property type="entry name" value="Protein-Tyr_Phosphatase"/>
</dbReference>
<dbReference type="InterPro" id="IPR000242">
    <property type="entry name" value="PTP_cat"/>
</dbReference>
<dbReference type="InterPro" id="IPR001763">
    <property type="entry name" value="Rhodanese-like_dom"/>
</dbReference>
<dbReference type="InterPro" id="IPR036873">
    <property type="entry name" value="Rhodanese-like_dom_sf"/>
</dbReference>
<dbReference type="InterPro" id="IPR016130">
    <property type="entry name" value="Tyr_Pase_AS"/>
</dbReference>
<dbReference type="InterPro" id="IPR003595">
    <property type="entry name" value="Tyr_Pase_cat"/>
</dbReference>
<dbReference type="InterPro" id="IPR000387">
    <property type="entry name" value="Tyr_Pase_dom"/>
</dbReference>
<dbReference type="PANTHER" id="PTHR19134">
    <property type="entry name" value="RECEPTOR-TYPE TYROSINE-PROTEIN PHOSPHATASE"/>
    <property type="match status" value="1"/>
</dbReference>
<dbReference type="PANTHER" id="PTHR19134:SF552">
    <property type="entry name" value="TYROSINE-PROTEIN PHOSPHATASE 2"/>
    <property type="match status" value="1"/>
</dbReference>
<dbReference type="Pfam" id="PF00581">
    <property type="entry name" value="Rhodanese"/>
    <property type="match status" value="1"/>
</dbReference>
<dbReference type="Pfam" id="PF00102">
    <property type="entry name" value="Y_phosphatase"/>
    <property type="match status" value="1"/>
</dbReference>
<dbReference type="PRINTS" id="PR00700">
    <property type="entry name" value="PRTYPHPHTASE"/>
</dbReference>
<dbReference type="SMART" id="SM00194">
    <property type="entry name" value="PTPc"/>
    <property type="match status" value="1"/>
</dbReference>
<dbReference type="SMART" id="SM00404">
    <property type="entry name" value="PTPc_motif"/>
    <property type="match status" value="1"/>
</dbReference>
<dbReference type="SMART" id="SM00450">
    <property type="entry name" value="RHOD"/>
    <property type="match status" value="1"/>
</dbReference>
<dbReference type="SUPFAM" id="SSF52799">
    <property type="entry name" value="(Phosphotyrosine protein) phosphatases II"/>
    <property type="match status" value="1"/>
</dbReference>
<dbReference type="SUPFAM" id="SSF52821">
    <property type="entry name" value="Rhodanese/Cell cycle control phosphatase"/>
    <property type="match status" value="1"/>
</dbReference>
<dbReference type="PROSITE" id="PS50206">
    <property type="entry name" value="RHODANESE_3"/>
    <property type="match status" value="1"/>
</dbReference>
<dbReference type="PROSITE" id="PS00383">
    <property type="entry name" value="TYR_PHOSPHATASE_1"/>
    <property type="match status" value="1"/>
</dbReference>
<dbReference type="PROSITE" id="PS50056">
    <property type="entry name" value="TYR_PHOSPHATASE_2"/>
    <property type="match status" value="1"/>
</dbReference>
<dbReference type="PROSITE" id="PS50055">
    <property type="entry name" value="TYR_PHOSPHATASE_PTP"/>
    <property type="match status" value="1"/>
</dbReference>
<accession>P32586</accession>
<accession>Q9UR59</accession>
<accession>Q9UU64</accession>
<organism>
    <name type="scientific">Schizosaccharomyces pombe (strain 972 / ATCC 24843)</name>
    <name type="common">Fission yeast</name>
    <dbReference type="NCBI Taxonomy" id="284812"/>
    <lineage>
        <taxon>Eukaryota</taxon>
        <taxon>Fungi</taxon>
        <taxon>Dikarya</taxon>
        <taxon>Ascomycota</taxon>
        <taxon>Taphrinomycotina</taxon>
        <taxon>Schizosaccharomycetes</taxon>
        <taxon>Schizosaccharomycetales</taxon>
        <taxon>Schizosaccharomycetaceae</taxon>
        <taxon>Schizosaccharomyces</taxon>
    </lineage>
</organism>
<sequence length="711" mass="79356">MLHLLSKDEFNSTLKSFEEQTESVSWIIDLRLHSKYAVSHIKNAINVSLPTALLRRPSFDIGKVFACIKCNVKVSLDEINAIFLYDSSMAGMNRIYDLVQKFRRGGYSKKIYLLSNGFEAFASSHPDAIVSTEMVKESVPYKIDINENCKLDILHLSDPSAVSTPISPDYSFPLRVPINIPPPLCTPSVVSDTFSEFASHAEYPGFSGLTPFSIHSPTASSVRSCQSIYGSPLSPPNSAFQAEMPYFPISPAISCASSCPSTPDEQKNFFIVGNAPQQTPARPSLRSVPSYPSSNNQRRPSASRVRSFSNYVKSSNVVNPSLSQASLEIIPRKSMKRDSNAQNDGTSTMTSKLKPSVGLSNTRDAPKPGGLRRANKPCFNKETKGSIFSKENKGPFTCNPWGAKKVSPPPCEVLADLNTASIFYKFKRLEEMEMTRSLAFNDSKSDWCCLASSRSTSISRKNRYTDIVPYDKTRVRLAVPKGCSDYINASHIDVGNKKYIACQAPKPGTLLDFWEMVWHNSGTNGVIVMLTNLYEAGSEKCSQYWPDNKDHALCLEGGLRISVQKYETFEDLKVNTHLFRLDKPNGPPKYIHHFWVHTWFDKTHPDIESITGIIRCIDKVPNDGPMFVHCSAGVGRTGTFIAVDQILQVPKNILPKTTNLEDSKDFIFNCVNSLRSQRMKMVQNFEQFKFLYDVVDYLNSGVNQASKPLMT</sequence>
<name>PYP2_SCHPO</name>
<keyword id="KW-0131">Cell cycle</keyword>
<keyword id="KW-0132">Cell division</keyword>
<keyword id="KW-0963">Cytoplasm</keyword>
<keyword id="KW-0378">Hydrolase</keyword>
<keyword id="KW-0498">Mitosis</keyword>
<keyword id="KW-0904">Protein phosphatase</keyword>
<keyword id="KW-1185">Reference proteome</keyword>
<feature type="chain" id="PRO_0000094859" description="Tyrosine-protein phosphatase 2">
    <location>
        <begin position="1"/>
        <end position="711"/>
    </location>
</feature>
<feature type="domain" description="Rhodanese" evidence="2">
    <location>
        <begin position="21"/>
        <end position="130"/>
    </location>
</feature>
<feature type="domain" description="Tyrosine-protein phosphatase" evidence="1">
    <location>
        <begin position="433"/>
        <end position="698"/>
    </location>
</feature>
<feature type="region of interest" description="Disordered" evidence="4">
    <location>
        <begin position="275"/>
        <end position="306"/>
    </location>
</feature>
<feature type="region of interest" description="Disordered" evidence="4">
    <location>
        <begin position="329"/>
        <end position="376"/>
    </location>
</feature>
<feature type="compositionally biased region" description="Polar residues" evidence="4">
    <location>
        <begin position="290"/>
        <end position="306"/>
    </location>
</feature>
<feature type="compositionally biased region" description="Polar residues" evidence="4">
    <location>
        <begin position="340"/>
        <end position="363"/>
    </location>
</feature>
<feature type="active site" description="Phosphocysteine intermediate" evidence="1 3">
    <location>
        <position position="630"/>
    </location>
</feature>
<feature type="sequence conflict" description="In Ref. 2; CAA42167." evidence="5" ref="2">
    <original>IVGNA</original>
    <variation>NRRQC</variation>
    <location>
        <begin position="271"/>
        <end position="275"/>
    </location>
</feature>
<feature type="sequence conflict" description="In Ref. 5." evidence="5" ref="5">
    <original>I</original>
    <variation>M</variation>
    <location>
        <position position="487"/>
    </location>
</feature>
<feature type="sequence conflict" description="In Ref. 5." evidence="5" ref="5">
    <original>E</original>
    <variation>N</variation>
    <location>
        <position position="515"/>
    </location>
</feature>
<feature type="sequence conflict" description="In Ref. 5." evidence="5" ref="5">
    <original>H</original>
    <variation>D</variation>
    <location>
        <position position="519"/>
    </location>
</feature>
<feature type="sequence conflict" description="In Ref. 2; CAA42167." evidence="5" ref="2">
    <original>R</original>
    <variation>P</variation>
    <location>
        <position position="636"/>
    </location>
</feature>
<feature type="sequence conflict" description="In Ref. 2; CAA42167." evidence="5" ref="2">
    <original>FNC</original>
    <variation>IQL</variation>
    <location>
        <begin position="668"/>
        <end position="670"/>
    </location>
</feature>
<feature type="sequence conflict" description="In Ref. 2; CAA42167." evidence="5" ref="2">
    <original>RS</original>
    <variation>DT</variation>
    <location>
        <begin position="675"/>
        <end position="676"/>
    </location>
</feature>